<reference key="1">
    <citation type="submission" date="2008-01" db="EMBL/GenBank/DDBJ databases">
        <title>Complete sequence of Shewanella halifaxensis HAW-EB4.</title>
        <authorList>
            <consortium name="US DOE Joint Genome Institute"/>
            <person name="Copeland A."/>
            <person name="Lucas S."/>
            <person name="Lapidus A."/>
            <person name="Glavina del Rio T."/>
            <person name="Dalin E."/>
            <person name="Tice H."/>
            <person name="Bruce D."/>
            <person name="Goodwin L."/>
            <person name="Pitluck S."/>
            <person name="Sims D."/>
            <person name="Brettin T."/>
            <person name="Detter J.C."/>
            <person name="Han C."/>
            <person name="Kuske C.R."/>
            <person name="Schmutz J."/>
            <person name="Larimer F."/>
            <person name="Land M."/>
            <person name="Hauser L."/>
            <person name="Kyrpides N."/>
            <person name="Kim E."/>
            <person name="Zhao J.-S."/>
            <person name="Richardson P."/>
        </authorList>
    </citation>
    <scope>NUCLEOTIDE SEQUENCE [LARGE SCALE GENOMIC DNA]</scope>
    <source>
        <strain>HAW-EB4</strain>
    </source>
</reference>
<gene>
    <name evidence="1" type="primary">rsmH</name>
    <name type="synonym">mraW</name>
    <name type="ordered locus">Shal_0447</name>
</gene>
<accession>B0TQM9</accession>
<evidence type="ECO:0000255" key="1">
    <source>
        <dbReference type="HAMAP-Rule" id="MF_01007"/>
    </source>
</evidence>
<sequence length="315" mass="35259">MTQEFEHLSVLLTETVAGLNIKPDGIYIDGTFGRGGHSRKVLEELGPNGRLIAIDRDPQAIAAAEQFKDDSRFQIVHGGFGQLADYVEDLGLKGKIDGVLLDFGVSSPQLDDAERGFSFLRDGPLDMRMDNSQGQTAAQWLARAEIEDMAWVFKTYGEEKNSRHIARCIAADREKAPFLRTKELADLIARITKNKERNKHPATRVFQAIRIYINSELEQIDQALEGALTVLAPEGRLSVISFHSLEDRMVKRFIRRNSQGESVPHGLPITEEEINKSRKLKGVGKAIKPSAEEIERNARARSSVLRIAQRLPYEA</sequence>
<dbReference type="EC" id="2.1.1.199" evidence="1"/>
<dbReference type="EMBL" id="CP000931">
    <property type="protein sequence ID" value="ABZ75022.1"/>
    <property type="molecule type" value="Genomic_DNA"/>
</dbReference>
<dbReference type="RefSeq" id="WP_012275576.1">
    <property type="nucleotide sequence ID" value="NC_010334.1"/>
</dbReference>
<dbReference type="SMR" id="B0TQM9"/>
<dbReference type="STRING" id="458817.Shal_0447"/>
<dbReference type="KEGG" id="shl:Shal_0447"/>
<dbReference type="eggNOG" id="COG0275">
    <property type="taxonomic scope" value="Bacteria"/>
</dbReference>
<dbReference type="HOGENOM" id="CLU_038422_2_0_6"/>
<dbReference type="OrthoDB" id="9806637at2"/>
<dbReference type="Proteomes" id="UP000001317">
    <property type="component" value="Chromosome"/>
</dbReference>
<dbReference type="GO" id="GO:0005737">
    <property type="term" value="C:cytoplasm"/>
    <property type="evidence" value="ECO:0007669"/>
    <property type="project" value="UniProtKB-SubCell"/>
</dbReference>
<dbReference type="GO" id="GO:0071424">
    <property type="term" value="F:rRNA (cytosine-N4-)-methyltransferase activity"/>
    <property type="evidence" value="ECO:0007669"/>
    <property type="project" value="UniProtKB-UniRule"/>
</dbReference>
<dbReference type="GO" id="GO:0070475">
    <property type="term" value="P:rRNA base methylation"/>
    <property type="evidence" value="ECO:0007669"/>
    <property type="project" value="UniProtKB-UniRule"/>
</dbReference>
<dbReference type="FunFam" id="1.10.150.170:FF:000001">
    <property type="entry name" value="Ribosomal RNA small subunit methyltransferase H"/>
    <property type="match status" value="1"/>
</dbReference>
<dbReference type="Gene3D" id="1.10.150.170">
    <property type="entry name" value="Putative methyltransferase TM0872, insert domain"/>
    <property type="match status" value="1"/>
</dbReference>
<dbReference type="Gene3D" id="3.40.50.150">
    <property type="entry name" value="Vaccinia Virus protein VP39"/>
    <property type="match status" value="1"/>
</dbReference>
<dbReference type="HAMAP" id="MF_01007">
    <property type="entry name" value="16SrRNA_methyltr_H"/>
    <property type="match status" value="1"/>
</dbReference>
<dbReference type="InterPro" id="IPR002903">
    <property type="entry name" value="RsmH"/>
</dbReference>
<dbReference type="InterPro" id="IPR023397">
    <property type="entry name" value="SAM-dep_MeTrfase_MraW_recog"/>
</dbReference>
<dbReference type="InterPro" id="IPR029063">
    <property type="entry name" value="SAM-dependent_MTases_sf"/>
</dbReference>
<dbReference type="NCBIfam" id="TIGR00006">
    <property type="entry name" value="16S rRNA (cytosine(1402)-N(4))-methyltransferase RsmH"/>
    <property type="match status" value="1"/>
</dbReference>
<dbReference type="PANTHER" id="PTHR11265:SF0">
    <property type="entry name" value="12S RRNA N4-METHYLCYTIDINE METHYLTRANSFERASE"/>
    <property type="match status" value="1"/>
</dbReference>
<dbReference type="PANTHER" id="PTHR11265">
    <property type="entry name" value="S-ADENOSYL-METHYLTRANSFERASE MRAW"/>
    <property type="match status" value="1"/>
</dbReference>
<dbReference type="Pfam" id="PF01795">
    <property type="entry name" value="Methyltransf_5"/>
    <property type="match status" value="1"/>
</dbReference>
<dbReference type="PIRSF" id="PIRSF004486">
    <property type="entry name" value="MraW"/>
    <property type="match status" value="1"/>
</dbReference>
<dbReference type="SUPFAM" id="SSF81799">
    <property type="entry name" value="Putative methyltransferase TM0872, insert domain"/>
    <property type="match status" value="1"/>
</dbReference>
<dbReference type="SUPFAM" id="SSF53335">
    <property type="entry name" value="S-adenosyl-L-methionine-dependent methyltransferases"/>
    <property type="match status" value="1"/>
</dbReference>
<organism>
    <name type="scientific">Shewanella halifaxensis (strain HAW-EB4)</name>
    <dbReference type="NCBI Taxonomy" id="458817"/>
    <lineage>
        <taxon>Bacteria</taxon>
        <taxon>Pseudomonadati</taxon>
        <taxon>Pseudomonadota</taxon>
        <taxon>Gammaproteobacteria</taxon>
        <taxon>Alteromonadales</taxon>
        <taxon>Shewanellaceae</taxon>
        <taxon>Shewanella</taxon>
    </lineage>
</organism>
<comment type="function">
    <text evidence="1">Specifically methylates the N4 position of cytidine in position 1402 (C1402) of 16S rRNA.</text>
</comment>
<comment type="catalytic activity">
    <reaction evidence="1">
        <text>cytidine(1402) in 16S rRNA + S-adenosyl-L-methionine = N(4)-methylcytidine(1402) in 16S rRNA + S-adenosyl-L-homocysteine + H(+)</text>
        <dbReference type="Rhea" id="RHEA:42928"/>
        <dbReference type="Rhea" id="RHEA-COMP:10286"/>
        <dbReference type="Rhea" id="RHEA-COMP:10287"/>
        <dbReference type="ChEBI" id="CHEBI:15378"/>
        <dbReference type="ChEBI" id="CHEBI:57856"/>
        <dbReference type="ChEBI" id="CHEBI:59789"/>
        <dbReference type="ChEBI" id="CHEBI:74506"/>
        <dbReference type="ChEBI" id="CHEBI:82748"/>
        <dbReference type="EC" id="2.1.1.199"/>
    </reaction>
</comment>
<comment type="subcellular location">
    <subcellularLocation>
        <location evidence="1">Cytoplasm</location>
    </subcellularLocation>
</comment>
<comment type="similarity">
    <text evidence="1">Belongs to the methyltransferase superfamily. RsmH family.</text>
</comment>
<proteinExistence type="inferred from homology"/>
<protein>
    <recommendedName>
        <fullName evidence="1">Ribosomal RNA small subunit methyltransferase H</fullName>
        <ecNumber evidence="1">2.1.1.199</ecNumber>
    </recommendedName>
    <alternativeName>
        <fullName evidence="1">16S rRNA m(4)C1402 methyltransferase</fullName>
    </alternativeName>
    <alternativeName>
        <fullName evidence="1">rRNA (cytosine-N(4)-)-methyltransferase RsmH</fullName>
    </alternativeName>
</protein>
<feature type="chain" id="PRO_0000387116" description="Ribosomal RNA small subunit methyltransferase H">
    <location>
        <begin position="1"/>
        <end position="315"/>
    </location>
</feature>
<feature type="binding site" evidence="1">
    <location>
        <begin position="35"/>
        <end position="37"/>
    </location>
    <ligand>
        <name>S-adenosyl-L-methionine</name>
        <dbReference type="ChEBI" id="CHEBI:59789"/>
    </ligand>
</feature>
<feature type="binding site" evidence="1">
    <location>
        <position position="55"/>
    </location>
    <ligand>
        <name>S-adenosyl-L-methionine</name>
        <dbReference type="ChEBI" id="CHEBI:59789"/>
    </ligand>
</feature>
<feature type="binding site" evidence="1">
    <location>
        <position position="80"/>
    </location>
    <ligand>
        <name>S-adenosyl-L-methionine</name>
        <dbReference type="ChEBI" id="CHEBI:59789"/>
    </ligand>
</feature>
<feature type="binding site" evidence="1">
    <location>
        <position position="102"/>
    </location>
    <ligand>
        <name>S-adenosyl-L-methionine</name>
        <dbReference type="ChEBI" id="CHEBI:59789"/>
    </ligand>
</feature>
<feature type="binding site" evidence="1">
    <location>
        <position position="109"/>
    </location>
    <ligand>
        <name>S-adenosyl-L-methionine</name>
        <dbReference type="ChEBI" id="CHEBI:59789"/>
    </ligand>
</feature>
<name>RSMH_SHEHH</name>
<keyword id="KW-0963">Cytoplasm</keyword>
<keyword id="KW-0489">Methyltransferase</keyword>
<keyword id="KW-0698">rRNA processing</keyword>
<keyword id="KW-0949">S-adenosyl-L-methionine</keyword>
<keyword id="KW-0808">Transferase</keyword>